<sequence>MTDRVIIFDTTLRDGEQALKASLTVKEKLQIALALERLGVDVMEVGFPVSSQGDFESVQTIARHIKNARVAALSRAVDKDIDAAYQALKVAEAFRIHTFIASSALHVEAKLKRSFDDVVGMAVAAVKRARNYTDDVEFSCEDAGRTGIDNICRIVEAAINAGATTVNIPDTVGFCLPNEYGNIIAQVRNRVPNIDKAVISVHCHNDLGMATANSLTAVQNGARQIECTINGIGERAGNTSLEEVVMAMKVRQDFMGVDTRINTQEIHRVSQMVSQLCNMPIQPNKAIVGSNAFAHSSGIHQDGMLKNKNTYEIMSPETIGLKKEKLNLTARSGRAAVKGHMADMGYNEQDYDLDKLYDAFLKLADKKGQVFDYDLEALAFIDMQQGDEDRLVLDKLSAHSTKEYPATAFVQLKLDGEKLSTSSIGGNGPVDAVYNAILNLTGLEIKMSHYNLTAKGEGAEALGQVDIVVEHKGRKFHGVGLATDIVESSALALVHAINAIYRAHKVADIKSHKHH</sequence>
<organism>
    <name type="scientific">Haemophilus influenzae (strain 86-028NP)</name>
    <dbReference type="NCBI Taxonomy" id="281310"/>
    <lineage>
        <taxon>Bacteria</taxon>
        <taxon>Pseudomonadati</taxon>
        <taxon>Pseudomonadota</taxon>
        <taxon>Gammaproteobacteria</taxon>
        <taxon>Pasteurellales</taxon>
        <taxon>Pasteurellaceae</taxon>
        <taxon>Haemophilus</taxon>
    </lineage>
</organism>
<comment type="function">
    <text evidence="1">Catalyzes the condensation of the acetyl group of acetyl-CoA with 3-methyl-2-oxobutanoate (2-ketoisovalerate) to form 3-carboxy-3-hydroxy-4-methylpentanoate (2-isopropylmalate).</text>
</comment>
<comment type="catalytic activity">
    <reaction evidence="1">
        <text>3-methyl-2-oxobutanoate + acetyl-CoA + H2O = (2S)-2-isopropylmalate + CoA + H(+)</text>
        <dbReference type="Rhea" id="RHEA:21524"/>
        <dbReference type="ChEBI" id="CHEBI:1178"/>
        <dbReference type="ChEBI" id="CHEBI:11851"/>
        <dbReference type="ChEBI" id="CHEBI:15377"/>
        <dbReference type="ChEBI" id="CHEBI:15378"/>
        <dbReference type="ChEBI" id="CHEBI:57287"/>
        <dbReference type="ChEBI" id="CHEBI:57288"/>
        <dbReference type="EC" id="2.3.3.13"/>
    </reaction>
</comment>
<comment type="cofactor">
    <cofactor evidence="1">
        <name>Mn(2+)</name>
        <dbReference type="ChEBI" id="CHEBI:29035"/>
    </cofactor>
</comment>
<comment type="pathway">
    <text evidence="1">Amino-acid biosynthesis; L-leucine biosynthesis; L-leucine from 3-methyl-2-oxobutanoate: step 1/4.</text>
</comment>
<comment type="subunit">
    <text evidence="1">Homodimer.</text>
</comment>
<comment type="subcellular location">
    <subcellularLocation>
        <location evidence="1">Cytoplasm</location>
    </subcellularLocation>
</comment>
<comment type="similarity">
    <text evidence="1">Belongs to the alpha-IPM synthase/homocitrate synthase family. LeuA type 1 subfamily.</text>
</comment>
<name>LEU1_HAEI8</name>
<protein>
    <recommendedName>
        <fullName evidence="1">2-isopropylmalate synthase</fullName>
        <ecNumber evidence="1">2.3.3.13</ecNumber>
    </recommendedName>
    <alternativeName>
        <fullName evidence="1">Alpha-IPM synthase</fullName>
    </alternativeName>
    <alternativeName>
        <fullName evidence="1">Alpha-isopropylmalate synthase</fullName>
    </alternativeName>
</protein>
<reference key="1">
    <citation type="journal article" date="2005" name="J. Bacteriol.">
        <title>Genomic sequence of an otitis media isolate of nontypeable Haemophilus influenzae: comparative study with H. influenzae serotype d, strain KW20.</title>
        <authorList>
            <person name="Harrison A."/>
            <person name="Dyer D.W."/>
            <person name="Gillaspy A."/>
            <person name="Ray W.C."/>
            <person name="Mungur R."/>
            <person name="Carson M.B."/>
            <person name="Zhong H."/>
            <person name="Gipson J."/>
            <person name="Gipson M."/>
            <person name="Johnson L.S."/>
            <person name="Lewis L."/>
            <person name="Bakaletz L.O."/>
            <person name="Munson R.S. Jr."/>
        </authorList>
    </citation>
    <scope>NUCLEOTIDE SEQUENCE [LARGE SCALE GENOMIC DNA]</scope>
    <source>
        <strain>86-028NP</strain>
    </source>
</reference>
<evidence type="ECO:0000255" key="1">
    <source>
        <dbReference type="HAMAP-Rule" id="MF_01025"/>
    </source>
</evidence>
<gene>
    <name evidence="1" type="primary">leuA</name>
    <name type="ordered locus">NTHI1160</name>
</gene>
<proteinExistence type="inferred from homology"/>
<keyword id="KW-0028">Amino-acid biosynthesis</keyword>
<keyword id="KW-0100">Branched-chain amino acid biosynthesis</keyword>
<keyword id="KW-0963">Cytoplasm</keyword>
<keyword id="KW-0432">Leucine biosynthesis</keyword>
<keyword id="KW-0464">Manganese</keyword>
<keyword id="KW-0479">Metal-binding</keyword>
<keyword id="KW-0808">Transferase</keyword>
<dbReference type="EC" id="2.3.3.13" evidence="1"/>
<dbReference type="EMBL" id="CP000057">
    <property type="protein sequence ID" value="AAX88023.1"/>
    <property type="molecule type" value="Genomic_DNA"/>
</dbReference>
<dbReference type="RefSeq" id="WP_011272331.1">
    <property type="nucleotide sequence ID" value="NC_007146.2"/>
</dbReference>
<dbReference type="SMR" id="Q4QLS4"/>
<dbReference type="KEGG" id="hit:NTHI1160"/>
<dbReference type="HOGENOM" id="CLU_022158_0_1_6"/>
<dbReference type="UniPathway" id="UPA00048">
    <property type="reaction ID" value="UER00070"/>
</dbReference>
<dbReference type="Proteomes" id="UP000002525">
    <property type="component" value="Chromosome"/>
</dbReference>
<dbReference type="GO" id="GO:0005829">
    <property type="term" value="C:cytosol"/>
    <property type="evidence" value="ECO:0007669"/>
    <property type="project" value="TreeGrafter"/>
</dbReference>
<dbReference type="GO" id="GO:0003852">
    <property type="term" value="F:2-isopropylmalate synthase activity"/>
    <property type="evidence" value="ECO:0007669"/>
    <property type="project" value="UniProtKB-UniRule"/>
</dbReference>
<dbReference type="GO" id="GO:0003985">
    <property type="term" value="F:acetyl-CoA C-acetyltransferase activity"/>
    <property type="evidence" value="ECO:0007669"/>
    <property type="project" value="UniProtKB-UniRule"/>
</dbReference>
<dbReference type="GO" id="GO:0030145">
    <property type="term" value="F:manganese ion binding"/>
    <property type="evidence" value="ECO:0007669"/>
    <property type="project" value="UniProtKB-UniRule"/>
</dbReference>
<dbReference type="GO" id="GO:0009098">
    <property type="term" value="P:L-leucine biosynthetic process"/>
    <property type="evidence" value="ECO:0007669"/>
    <property type="project" value="UniProtKB-UniRule"/>
</dbReference>
<dbReference type="CDD" id="cd07940">
    <property type="entry name" value="DRE_TIM_IPMS"/>
    <property type="match status" value="1"/>
</dbReference>
<dbReference type="FunFam" id="1.10.238.260:FF:000001">
    <property type="entry name" value="2-isopropylmalate synthase"/>
    <property type="match status" value="1"/>
</dbReference>
<dbReference type="FunFam" id="3.20.20.70:FF:000010">
    <property type="entry name" value="2-isopropylmalate synthase"/>
    <property type="match status" value="1"/>
</dbReference>
<dbReference type="FunFam" id="3.30.160.270:FF:000001">
    <property type="entry name" value="2-isopropylmalate synthase"/>
    <property type="match status" value="1"/>
</dbReference>
<dbReference type="Gene3D" id="1.10.238.260">
    <property type="match status" value="1"/>
</dbReference>
<dbReference type="Gene3D" id="3.30.160.270">
    <property type="match status" value="1"/>
</dbReference>
<dbReference type="Gene3D" id="3.20.20.70">
    <property type="entry name" value="Aldolase class I"/>
    <property type="match status" value="1"/>
</dbReference>
<dbReference type="HAMAP" id="MF_01025">
    <property type="entry name" value="LeuA_type1"/>
    <property type="match status" value="1"/>
</dbReference>
<dbReference type="InterPro" id="IPR050073">
    <property type="entry name" value="2-IPM_HCS-like"/>
</dbReference>
<dbReference type="InterPro" id="IPR013709">
    <property type="entry name" value="2-isopropylmalate_synth_dimer"/>
</dbReference>
<dbReference type="InterPro" id="IPR002034">
    <property type="entry name" value="AIPM/Hcit_synth_CS"/>
</dbReference>
<dbReference type="InterPro" id="IPR013785">
    <property type="entry name" value="Aldolase_TIM"/>
</dbReference>
<dbReference type="InterPro" id="IPR054691">
    <property type="entry name" value="LeuA/HCS_post-cat"/>
</dbReference>
<dbReference type="InterPro" id="IPR036230">
    <property type="entry name" value="LeuA_allosteric_dom_sf"/>
</dbReference>
<dbReference type="InterPro" id="IPR005671">
    <property type="entry name" value="LeuA_bact_synth"/>
</dbReference>
<dbReference type="InterPro" id="IPR000891">
    <property type="entry name" value="PYR_CT"/>
</dbReference>
<dbReference type="NCBIfam" id="TIGR00973">
    <property type="entry name" value="leuA_bact"/>
    <property type="match status" value="1"/>
</dbReference>
<dbReference type="NCBIfam" id="NF002084">
    <property type="entry name" value="PRK00915.1-1"/>
    <property type="match status" value="1"/>
</dbReference>
<dbReference type="NCBIfam" id="NF002086">
    <property type="entry name" value="PRK00915.1-3"/>
    <property type="match status" value="1"/>
</dbReference>
<dbReference type="PANTHER" id="PTHR10277:SF9">
    <property type="entry name" value="2-ISOPROPYLMALATE SYNTHASE 1, CHLOROPLASTIC-RELATED"/>
    <property type="match status" value="1"/>
</dbReference>
<dbReference type="PANTHER" id="PTHR10277">
    <property type="entry name" value="HOMOCITRATE SYNTHASE-RELATED"/>
    <property type="match status" value="1"/>
</dbReference>
<dbReference type="Pfam" id="PF22617">
    <property type="entry name" value="HCS_D2"/>
    <property type="match status" value="1"/>
</dbReference>
<dbReference type="Pfam" id="PF00682">
    <property type="entry name" value="HMGL-like"/>
    <property type="match status" value="1"/>
</dbReference>
<dbReference type="Pfam" id="PF08502">
    <property type="entry name" value="LeuA_dimer"/>
    <property type="match status" value="1"/>
</dbReference>
<dbReference type="SMART" id="SM00917">
    <property type="entry name" value="LeuA_dimer"/>
    <property type="match status" value="1"/>
</dbReference>
<dbReference type="SUPFAM" id="SSF110921">
    <property type="entry name" value="2-isopropylmalate synthase LeuA, allosteric (dimerisation) domain"/>
    <property type="match status" value="1"/>
</dbReference>
<dbReference type="SUPFAM" id="SSF51569">
    <property type="entry name" value="Aldolase"/>
    <property type="match status" value="1"/>
</dbReference>
<dbReference type="PROSITE" id="PS00815">
    <property type="entry name" value="AIPM_HOMOCIT_SYNTH_1"/>
    <property type="match status" value="1"/>
</dbReference>
<dbReference type="PROSITE" id="PS00816">
    <property type="entry name" value="AIPM_HOMOCIT_SYNTH_2"/>
    <property type="match status" value="1"/>
</dbReference>
<dbReference type="PROSITE" id="PS50991">
    <property type="entry name" value="PYR_CT"/>
    <property type="match status" value="1"/>
</dbReference>
<accession>Q4QLS4</accession>
<feature type="chain" id="PRO_1000149205" description="2-isopropylmalate synthase">
    <location>
        <begin position="1"/>
        <end position="515"/>
    </location>
</feature>
<feature type="domain" description="Pyruvate carboxyltransferase" evidence="1">
    <location>
        <begin position="5"/>
        <end position="267"/>
    </location>
</feature>
<feature type="region of interest" description="Regulatory domain" evidence="1">
    <location>
        <begin position="392"/>
        <end position="515"/>
    </location>
</feature>
<feature type="binding site" evidence="1">
    <location>
        <position position="14"/>
    </location>
    <ligand>
        <name>Mn(2+)</name>
        <dbReference type="ChEBI" id="CHEBI:29035"/>
    </ligand>
</feature>
<feature type="binding site" evidence="1">
    <location>
        <position position="202"/>
    </location>
    <ligand>
        <name>Mn(2+)</name>
        <dbReference type="ChEBI" id="CHEBI:29035"/>
    </ligand>
</feature>
<feature type="binding site" evidence="1">
    <location>
        <position position="204"/>
    </location>
    <ligand>
        <name>Mn(2+)</name>
        <dbReference type="ChEBI" id="CHEBI:29035"/>
    </ligand>
</feature>
<feature type="binding site" evidence="1">
    <location>
        <position position="238"/>
    </location>
    <ligand>
        <name>Mn(2+)</name>
        <dbReference type="ChEBI" id="CHEBI:29035"/>
    </ligand>
</feature>